<gene>
    <name evidence="1" type="primary">murC</name>
    <name type="ordered locus">FRAAL2198</name>
</gene>
<proteinExistence type="inferred from homology"/>
<accession>Q0RNN9</accession>
<evidence type="ECO:0000255" key="1">
    <source>
        <dbReference type="HAMAP-Rule" id="MF_00046"/>
    </source>
</evidence>
<evidence type="ECO:0000256" key="2">
    <source>
        <dbReference type="SAM" id="MobiDB-lite"/>
    </source>
</evidence>
<keyword id="KW-0067">ATP-binding</keyword>
<keyword id="KW-0131">Cell cycle</keyword>
<keyword id="KW-0132">Cell division</keyword>
<keyword id="KW-0133">Cell shape</keyword>
<keyword id="KW-0961">Cell wall biogenesis/degradation</keyword>
<keyword id="KW-0963">Cytoplasm</keyword>
<keyword id="KW-0436">Ligase</keyword>
<keyword id="KW-0547">Nucleotide-binding</keyword>
<keyword id="KW-0573">Peptidoglycan synthesis</keyword>
<keyword id="KW-1185">Reference proteome</keyword>
<protein>
    <recommendedName>
        <fullName evidence="1">UDP-N-acetylmuramate--L-alanine ligase</fullName>
        <ecNumber evidence="1">6.3.2.8</ecNumber>
    </recommendedName>
    <alternativeName>
        <fullName evidence="1">UDP-N-acetylmuramoyl-L-alanine synthetase</fullName>
    </alternativeName>
</protein>
<organism>
    <name type="scientific">Frankia alni (strain DSM 45986 / CECT 9034 / ACN14a)</name>
    <dbReference type="NCBI Taxonomy" id="326424"/>
    <lineage>
        <taxon>Bacteria</taxon>
        <taxon>Bacillati</taxon>
        <taxon>Actinomycetota</taxon>
        <taxon>Actinomycetes</taxon>
        <taxon>Frankiales</taxon>
        <taxon>Frankiaceae</taxon>
        <taxon>Frankia</taxon>
    </lineage>
</organism>
<comment type="function">
    <text evidence="1">Cell wall formation.</text>
</comment>
<comment type="catalytic activity">
    <reaction evidence="1">
        <text>UDP-N-acetyl-alpha-D-muramate + L-alanine + ATP = UDP-N-acetyl-alpha-D-muramoyl-L-alanine + ADP + phosphate + H(+)</text>
        <dbReference type="Rhea" id="RHEA:23372"/>
        <dbReference type="ChEBI" id="CHEBI:15378"/>
        <dbReference type="ChEBI" id="CHEBI:30616"/>
        <dbReference type="ChEBI" id="CHEBI:43474"/>
        <dbReference type="ChEBI" id="CHEBI:57972"/>
        <dbReference type="ChEBI" id="CHEBI:70757"/>
        <dbReference type="ChEBI" id="CHEBI:83898"/>
        <dbReference type="ChEBI" id="CHEBI:456216"/>
        <dbReference type="EC" id="6.3.2.8"/>
    </reaction>
</comment>
<comment type="pathway">
    <text evidence="1">Cell wall biogenesis; peptidoglycan biosynthesis.</text>
</comment>
<comment type="subcellular location">
    <subcellularLocation>
        <location evidence="1">Cytoplasm</location>
    </subcellularLocation>
</comment>
<comment type="similarity">
    <text evidence="1">Belongs to the MurCDEF family.</text>
</comment>
<sequence>MTRQRTQHVHFLGIGGSGLSPLAQIHLAGGGKVSGSDAEDSPRVATLRARGVPVRVGPAPAAEKIAAELAGVDVVVASSALAEDHPEIVAARSLGLAVRRRSEWLPELTAGYRLVAVAGSHGKSTTSAMLTLVLRAAGLDPTAVIGAEVSQLGGNALAGSGDLFVLESDEYGGAFAGLEPTIAVITNVEWEHPDIFPDEASVRTAFTAFARRVRPGGRLVVCGDDPGVAAVLAELHRQGTPAAAPVLDYGFGTDRRWRAVDVATVAGDDTARAVVLHGGQEIGTLTLAVPGRHSLLNALAVLAVATELGVAPAQTLATLATYTGAARRFEFVGFWRAGTPDPAVPAAAGAAAAPPVRRDPATAAAAATTAPIGPPDSPPPTGIALPRAAPPAVDAPVAATPAPAAGPDHAAALPAPAGALASRSPTGPATAVADPVGEWSLEIIDDYAHHPTEIRLTLAAARARTHGRALWAVLQPHTYSRFAALLDGFATAFADADRVYVTDIYAARETDDLGRHPTDLVERLVGPAVVGYVPWPELVDRLAADVRDTLSGPVPAQAGGILLLTLGAGTITTVGPRLLAALDEPAAG</sequence>
<reference key="1">
    <citation type="journal article" date="2007" name="Genome Res.">
        <title>Genome characteristics of facultatively symbiotic Frankia sp. strains reflect host range and host plant biogeography.</title>
        <authorList>
            <person name="Normand P."/>
            <person name="Lapierre P."/>
            <person name="Tisa L.S."/>
            <person name="Gogarten J.P."/>
            <person name="Alloisio N."/>
            <person name="Bagnarol E."/>
            <person name="Bassi C.A."/>
            <person name="Berry A.M."/>
            <person name="Bickhart D.M."/>
            <person name="Choisne N."/>
            <person name="Couloux A."/>
            <person name="Cournoyer B."/>
            <person name="Cruveiller S."/>
            <person name="Daubin V."/>
            <person name="Demange N."/>
            <person name="Francino M.P."/>
            <person name="Goltsman E."/>
            <person name="Huang Y."/>
            <person name="Kopp O.R."/>
            <person name="Labarre L."/>
            <person name="Lapidus A."/>
            <person name="Lavire C."/>
            <person name="Marechal J."/>
            <person name="Martinez M."/>
            <person name="Mastronunzio J.E."/>
            <person name="Mullin B.C."/>
            <person name="Niemann J."/>
            <person name="Pujic P."/>
            <person name="Rawnsley T."/>
            <person name="Rouy Z."/>
            <person name="Schenowitz C."/>
            <person name="Sellstedt A."/>
            <person name="Tavares F."/>
            <person name="Tomkins J.P."/>
            <person name="Vallenet D."/>
            <person name="Valverde C."/>
            <person name="Wall L.G."/>
            <person name="Wang Y."/>
            <person name="Medigue C."/>
            <person name="Benson D.R."/>
        </authorList>
    </citation>
    <scope>NUCLEOTIDE SEQUENCE [LARGE SCALE GENOMIC DNA]</scope>
    <source>
        <strain>DSM 45986 / CECT 9034 / ACN14a</strain>
    </source>
</reference>
<feature type="chain" id="PRO_0000336834" description="UDP-N-acetylmuramate--L-alanine ligase">
    <location>
        <begin position="1"/>
        <end position="588"/>
    </location>
</feature>
<feature type="region of interest" description="Disordered" evidence="2">
    <location>
        <begin position="344"/>
        <end position="411"/>
    </location>
</feature>
<feature type="compositionally biased region" description="Low complexity" evidence="2">
    <location>
        <begin position="344"/>
        <end position="371"/>
    </location>
</feature>
<feature type="compositionally biased region" description="Pro residues" evidence="2">
    <location>
        <begin position="372"/>
        <end position="381"/>
    </location>
</feature>
<feature type="compositionally biased region" description="Low complexity" evidence="2">
    <location>
        <begin position="382"/>
        <end position="411"/>
    </location>
</feature>
<feature type="binding site" evidence="1">
    <location>
        <begin position="119"/>
        <end position="125"/>
    </location>
    <ligand>
        <name>ATP</name>
        <dbReference type="ChEBI" id="CHEBI:30616"/>
    </ligand>
</feature>
<dbReference type="EC" id="6.3.2.8" evidence="1"/>
<dbReference type="EMBL" id="CT573213">
    <property type="protein sequence ID" value="CAJ60847.1"/>
    <property type="molecule type" value="Genomic_DNA"/>
</dbReference>
<dbReference type="RefSeq" id="WP_011603363.1">
    <property type="nucleotide sequence ID" value="NC_008278.1"/>
</dbReference>
<dbReference type="SMR" id="Q0RNN9"/>
<dbReference type="STRING" id="326424.FRAAL2198"/>
<dbReference type="KEGG" id="fal:FRAAL2198"/>
<dbReference type="eggNOG" id="COG0773">
    <property type="taxonomic scope" value="Bacteria"/>
</dbReference>
<dbReference type="HOGENOM" id="CLU_028104_2_0_11"/>
<dbReference type="UniPathway" id="UPA00219"/>
<dbReference type="Proteomes" id="UP000000657">
    <property type="component" value="Chromosome"/>
</dbReference>
<dbReference type="GO" id="GO:0005737">
    <property type="term" value="C:cytoplasm"/>
    <property type="evidence" value="ECO:0007669"/>
    <property type="project" value="UniProtKB-SubCell"/>
</dbReference>
<dbReference type="GO" id="GO:0005524">
    <property type="term" value="F:ATP binding"/>
    <property type="evidence" value="ECO:0007669"/>
    <property type="project" value="UniProtKB-UniRule"/>
</dbReference>
<dbReference type="GO" id="GO:0008763">
    <property type="term" value="F:UDP-N-acetylmuramate-L-alanine ligase activity"/>
    <property type="evidence" value="ECO:0007669"/>
    <property type="project" value="UniProtKB-UniRule"/>
</dbReference>
<dbReference type="GO" id="GO:0051301">
    <property type="term" value="P:cell division"/>
    <property type="evidence" value="ECO:0007669"/>
    <property type="project" value="UniProtKB-KW"/>
</dbReference>
<dbReference type="GO" id="GO:0071555">
    <property type="term" value="P:cell wall organization"/>
    <property type="evidence" value="ECO:0007669"/>
    <property type="project" value="UniProtKB-KW"/>
</dbReference>
<dbReference type="GO" id="GO:0009252">
    <property type="term" value="P:peptidoglycan biosynthetic process"/>
    <property type="evidence" value="ECO:0007669"/>
    <property type="project" value="UniProtKB-UniRule"/>
</dbReference>
<dbReference type="GO" id="GO:0008360">
    <property type="term" value="P:regulation of cell shape"/>
    <property type="evidence" value="ECO:0007669"/>
    <property type="project" value="UniProtKB-KW"/>
</dbReference>
<dbReference type="Gene3D" id="3.90.190.20">
    <property type="entry name" value="Mur ligase, C-terminal domain"/>
    <property type="match status" value="1"/>
</dbReference>
<dbReference type="Gene3D" id="3.40.1190.10">
    <property type="entry name" value="Mur-like, catalytic domain"/>
    <property type="match status" value="1"/>
</dbReference>
<dbReference type="Gene3D" id="3.40.50.720">
    <property type="entry name" value="NAD(P)-binding Rossmann-like Domain"/>
    <property type="match status" value="1"/>
</dbReference>
<dbReference type="HAMAP" id="MF_00046">
    <property type="entry name" value="MurC"/>
    <property type="match status" value="1"/>
</dbReference>
<dbReference type="InterPro" id="IPR036565">
    <property type="entry name" value="Mur-like_cat_sf"/>
</dbReference>
<dbReference type="InterPro" id="IPR004101">
    <property type="entry name" value="Mur_ligase_C"/>
</dbReference>
<dbReference type="InterPro" id="IPR036615">
    <property type="entry name" value="Mur_ligase_C_dom_sf"/>
</dbReference>
<dbReference type="InterPro" id="IPR013221">
    <property type="entry name" value="Mur_ligase_cen"/>
</dbReference>
<dbReference type="InterPro" id="IPR000713">
    <property type="entry name" value="Mur_ligase_N"/>
</dbReference>
<dbReference type="InterPro" id="IPR050061">
    <property type="entry name" value="MurCDEF_pg_biosynth"/>
</dbReference>
<dbReference type="InterPro" id="IPR005758">
    <property type="entry name" value="UDP-N-AcMur_Ala_ligase_MurC"/>
</dbReference>
<dbReference type="PANTHER" id="PTHR43445:SF3">
    <property type="entry name" value="UDP-N-ACETYLMURAMATE--L-ALANINE LIGASE"/>
    <property type="match status" value="1"/>
</dbReference>
<dbReference type="PANTHER" id="PTHR43445">
    <property type="entry name" value="UDP-N-ACETYLMURAMATE--L-ALANINE LIGASE-RELATED"/>
    <property type="match status" value="1"/>
</dbReference>
<dbReference type="Pfam" id="PF01225">
    <property type="entry name" value="Mur_ligase"/>
    <property type="match status" value="1"/>
</dbReference>
<dbReference type="Pfam" id="PF02875">
    <property type="entry name" value="Mur_ligase_C"/>
    <property type="match status" value="1"/>
</dbReference>
<dbReference type="Pfam" id="PF08245">
    <property type="entry name" value="Mur_ligase_M"/>
    <property type="match status" value="1"/>
</dbReference>
<dbReference type="SUPFAM" id="SSF51984">
    <property type="entry name" value="MurCD N-terminal domain"/>
    <property type="match status" value="1"/>
</dbReference>
<dbReference type="SUPFAM" id="SSF53623">
    <property type="entry name" value="MurD-like peptide ligases, catalytic domain"/>
    <property type="match status" value="1"/>
</dbReference>
<dbReference type="SUPFAM" id="SSF53244">
    <property type="entry name" value="MurD-like peptide ligases, peptide-binding domain"/>
    <property type="match status" value="1"/>
</dbReference>
<name>MURC_FRAAA</name>